<feature type="chain" id="PRO_0000439012" description="Cytochrome P450 90A3">
    <location>
        <begin position="1"/>
        <end position="501"/>
    </location>
</feature>
<feature type="transmembrane region" description="Helical" evidence="2">
    <location>
        <begin position="2"/>
        <end position="22"/>
    </location>
</feature>
<feature type="binding site" description="axial binding residue" evidence="1">
    <location>
        <position position="446"/>
    </location>
    <ligand>
        <name>heme</name>
        <dbReference type="ChEBI" id="CHEBI:30413"/>
    </ligand>
    <ligandPart>
        <name>Fe</name>
        <dbReference type="ChEBI" id="CHEBI:18248"/>
    </ligandPart>
</feature>
<feature type="sequence conflict" description="In Ref. 1; BAD90973." evidence="5" ref="1">
    <original>L</original>
    <variation>F</variation>
    <location>
        <position position="144"/>
    </location>
</feature>
<dbReference type="EC" id="1.14.99.-" evidence="6"/>
<dbReference type="EMBL" id="AB206580">
    <property type="protein sequence ID" value="BAD90973.1"/>
    <property type="molecule type" value="mRNA"/>
</dbReference>
<dbReference type="EMBL" id="DP000010">
    <property type="protein sequence ID" value="ABA91412.1"/>
    <property type="molecule type" value="Genomic_DNA"/>
</dbReference>
<dbReference type="EMBL" id="AP008217">
    <property type="protein sequence ID" value="BAF27566.1"/>
    <property type="molecule type" value="Genomic_DNA"/>
</dbReference>
<dbReference type="EMBL" id="AP014967">
    <property type="protein sequence ID" value="BAT12633.1"/>
    <property type="molecule type" value="Genomic_DNA"/>
</dbReference>
<dbReference type="EMBL" id="CM000148">
    <property type="protein sequence ID" value="EAZ17406.1"/>
    <property type="molecule type" value="Genomic_DNA"/>
</dbReference>
<dbReference type="RefSeq" id="XP_015616657.1">
    <property type="nucleotide sequence ID" value="XM_015761171.1"/>
</dbReference>
<dbReference type="SMR" id="Q2RAP4"/>
<dbReference type="FunCoup" id="Q2RAP4">
    <property type="interactions" value="240"/>
</dbReference>
<dbReference type="STRING" id="39947.Q2RAP4"/>
<dbReference type="PaxDb" id="39947-Q2RAP4"/>
<dbReference type="EnsemblPlants" id="Os11t0143200-01">
    <property type="protein sequence ID" value="Os11t0143200-01"/>
    <property type="gene ID" value="Os11g0143200"/>
</dbReference>
<dbReference type="Gramene" id="Os11t0143200-01">
    <property type="protein sequence ID" value="Os11t0143200-01"/>
    <property type="gene ID" value="Os11g0143200"/>
</dbReference>
<dbReference type="KEGG" id="dosa:Os11g0143200"/>
<dbReference type="eggNOG" id="KOG0157">
    <property type="taxonomic scope" value="Eukaryota"/>
</dbReference>
<dbReference type="HOGENOM" id="CLU_001570_15_5_1"/>
<dbReference type="InParanoid" id="Q2RAP4"/>
<dbReference type="OMA" id="MIIHSTR"/>
<dbReference type="OrthoDB" id="3945418at2759"/>
<dbReference type="PlantReactome" id="R-OSA-1119456">
    <property type="pathway name" value="Brassinosteroid biosynthesis II"/>
</dbReference>
<dbReference type="UniPathway" id="UPA00381"/>
<dbReference type="Proteomes" id="UP000000763">
    <property type="component" value="Chromosome 11"/>
</dbReference>
<dbReference type="Proteomes" id="UP000007752">
    <property type="component" value="Chromosome 11"/>
</dbReference>
<dbReference type="Proteomes" id="UP000059680">
    <property type="component" value="Chromosome 11"/>
</dbReference>
<dbReference type="GO" id="GO:0016020">
    <property type="term" value="C:membrane"/>
    <property type="evidence" value="ECO:0007669"/>
    <property type="project" value="UniProtKB-SubCell"/>
</dbReference>
<dbReference type="GO" id="GO:0080132">
    <property type="term" value="F:fatty acid 2-hydroxylase activity"/>
    <property type="evidence" value="ECO:0000314"/>
    <property type="project" value="UniProtKB"/>
</dbReference>
<dbReference type="GO" id="GO:0020037">
    <property type="term" value="F:heme binding"/>
    <property type="evidence" value="ECO:0007669"/>
    <property type="project" value="InterPro"/>
</dbReference>
<dbReference type="GO" id="GO:0005506">
    <property type="term" value="F:iron ion binding"/>
    <property type="evidence" value="ECO:0007669"/>
    <property type="project" value="InterPro"/>
</dbReference>
<dbReference type="GO" id="GO:0004497">
    <property type="term" value="F:monooxygenase activity"/>
    <property type="evidence" value="ECO:0000318"/>
    <property type="project" value="GO_Central"/>
</dbReference>
<dbReference type="GO" id="GO:0016132">
    <property type="term" value="P:brassinosteroid biosynthetic process"/>
    <property type="evidence" value="ECO:0000314"/>
    <property type="project" value="UniProtKB"/>
</dbReference>
<dbReference type="GO" id="GO:0010268">
    <property type="term" value="P:brassinosteroid homeostasis"/>
    <property type="evidence" value="ECO:0000318"/>
    <property type="project" value="GO_Central"/>
</dbReference>
<dbReference type="CDD" id="cd11043">
    <property type="entry name" value="CYP90-like"/>
    <property type="match status" value="1"/>
</dbReference>
<dbReference type="FunFam" id="1.10.630.10:FF:000046">
    <property type="entry name" value="Cytochrome P450 90A1"/>
    <property type="match status" value="1"/>
</dbReference>
<dbReference type="Gene3D" id="1.10.630.10">
    <property type="entry name" value="Cytochrome P450"/>
    <property type="match status" value="1"/>
</dbReference>
<dbReference type="InterPro" id="IPR001128">
    <property type="entry name" value="Cyt_P450"/>
</dbReference>
<dbReference type="InterPro" id="IPR017972">
    <property type="entry name" value="Cyt_P450_CS"/>
</dbReference>
<dbReference type="InterPro" id="IPR002401">
    <property type="entry name" value="Cyt_P450_E_grp-I"/>
</dbReference>
<dbReference type="InterPro" id="IPR036396">
    <property type="entry name" value="Cyt_P450_sf"/>
</dbReference>
<dbReference type="PANTHER" id="PTHR24286:SF44">
    <property type="entry name" value="3BETA,22ALPHA-DIHYDROXYSTEROID 3-DEHYDROGENASE"/>
    <property type="match status" value="1"/>
</dbReference>
<dbReference type="PANTHER" id="PTHR24286">
    <property type="entry name" value="CYTOCHROME P450 26"/>
    <property type="match status" value="1"/>
</dbReference>
<dbReference type="Pfam" id="PF00067">
    <property type="entry name" value="p450"/>
    <property type="match status" value="1"/>
</dbReference>
<dbReference type="PRINTS" id="PR00463">
    <property type="entry name" value="EP450I"/>
</dbReference>
<dbReference type="PRINTS" id="PR00385">
    <property type="entry name" value="P450"/>
</dbReference>
<dbReference type="SUPFAM" id="SSF48264">
    <property type="entry name" value="Cytochrome P450"/>
    <property type="match status" value="1"/>
</dbReference>
<dbReference type="PROSITE" id="PS00086">
    <property type="entry name" value="CYTOCHROME_P450"/>
    <property type="match status" value="1"/>
</dbReference>
<protein>
    <recommendedName>
        <fullName evidence="5">Cytochrome P450 90A3</fullName>
        <shortName evidence="5">OsCYP90A3</shortName>
        <ecNumber evidence="6">1.14.99.-</ecNumber>
    </recommendedName>
    <alternativeName>
        <fullName evidence="4">Protein CONSTITUTIVE PHOTOMORPHOGENESIS AND DWARFISM 1</fullName>
        <shortName evidence="4">OsCPD1</shortName>
    </alternativeName>
    <alternativeName>
        <fullName evidence="5">Steroid 23-alpha-hydroxylase</fullName>
    </alternativeName>
</protein>
<proteinExistence type="evidence at transcript level"/>
<organism>
    <name type="scientific">Oryza sativa subsp. japonica</name>
    <name type="common">Rice</name>
    <dbReference type="NCBI Taxonomy" id="39947"/>
    <lineage>
        <taxon>Eukaryota</taxon>
        <taxon>Viridiplantae</taxon>
        <taxon>Streptophyta</taxon>
        <taxon>Embryophyta</taxon>
        <taxon>Tracheophyta</taxon>
        <taxon>Spermatophyta</taxon>
        <taxon>Magnoliopsida</taxon>
        <taxon>Liliopsida</taxon>
        <taxon>Poales</taxon>
        <taxon>Poaceae</taxon>
        <taxon>BOP clade</taxon>
        <taxon>Oryzoideae</taxon>
        <taxon>Oryzeae</taxon>
        <taxon>Oryzinae</taxon>
        <taxon>Oryza</taxon>
        <taxon>Oryza sativa</taxon>
    </lineage>
</organism>
<reference key="1">
    <citation type="journal article" date="2006" name="Nat. Biotechnol.">
        <title>Erect leaves caused by brassinosteroid deficiency increase biomass production and grain yield in rice.</title>
        <authorList>
            <person name="Sakamoto T."/>
            <person name="Morinaka Y."/>
            <person name="Ohnishi T."/>
            <person name="Sunohara H."/>
            <person name="Fujioka S."/>
            <person name="Ueguchi-Tanaka M."/>
            <person name="Mizutani M."/>
            <person name="Sakata K."/>
            <person name="Takatsuto S."/>
            <person name="Yoshida S."/>
            <person name="Tanaka H."/>
            <person name="Kitano H."/>
            <person name="Matsuoka M."/>
        </authorList>
    </citation>
    <scope>NUCLEOTIDE SEQUENCE [MRNA]</scope>
    <source>
        <strain>cv. Nipponbare</strain>
    </source>
</reference>
<reference key="2">
    <citation type="journal article" date="2005" name="BMC Biol.">
        <title>The sequence of rice chromosomes 11 and 12, rich in disease resistance genes and recent gene duplications.</title>
        <authorList>
            <consortium name="The rice chromosomes 11 and 12 sequencing consortia"/>
        </authorList>
    </citation>
    <scope>NUCLEOTIDE SEQUENCE [LARGE SCALE GENOMIC DNA]</scope>
    <source>
        <strain>cv. Nipponbare</strain>
    </source>
</reference>
<reference key="3">
    <citation type="journal article" date="2005" name="Nature">
        <title>The map-based sequence of the rice genome.</title>
        <authorList>
            <consortium name="International rice genome sequencing project (IRGSP)"/>
        </authorList>
    </citation>
    <scope>NUCLEOTIDE SEQUENCE [LARGE SCALE GENOMIC DNA]</scope>
    <source>
        <strain>cv. Nipponbare</strain>
    </source>
</reference>
<reference key="4">
    <citation type="journal article" date="2008" name="Nucleic Acids Res.">
        <title>The rice annotation project database (RAP-DB): 2008 update.</title>
        <authorList>
            <consortium name="The rice annotation project (RAP)"/>
        </authorList>
    </citation>
    <scope>GENOME REANNOTATION</scope>
    <source>
        <strain>cv. Nipponbare</strain>
    </source>
</reference>
<reference key="5">
    <citation type="journal article" date="2013" name="Rice">
        <title>Improvement of the Oryza sativa Nipponbare reference genome using next generation sequence and optical map data.</title>
        <authorList>
            <person name="Kawahara Y."/>
            <person name="de la Bastide M."/>
            <person name="Hamilton J.P."/>
            <person name="Kanamori H."/>
            <person name="McCombie W.R."/>
            <person name="Ouyang S."/>
            <person name="Schwartz D.C."/>
            <person name="Tanaka T."/>
            <person name="Wu J."/>
            <person name="Zhou S."/>
            <person name="Childs K.L."/>
            <person name="Davidson R.M."/>
            <person name="Lin H."/>
            <person name="Quesada-Ocampo L."/>
            <person name="Vaillancourt B."/>
            <person name="Sakai H."/>
            <person name="Lee S.S."/>
            <person name="Kim J."/>
            <person name="Numa H."/>
            <person name="Itoh T."/>
            <person name="Buell C.R."/>
            <person name="Matsumoto T."/>
        </authorList>
    </citation>
    <scope>GENOME REANNOTATION</scope>
    <source>
        <strain>cv. Nipponbare</strain>
    </source>
</reference>
<reference key="6">
    <citation type="journal article" date="2005" name="PLoS Biol.">
        <title>The genomes of Oryza sativa: a history of duplications.</title>
        <authorList>
            <person name="Yu J."/>
            <person name="Wang J."/>
            <person name="Lin W."/>
            <person name="Li S."/>
            <person name="Li H."/>
            <person name="Zhou J."/>
            <person name="Ni P."/>
            <person name="Dong W."/>
            <person name="Hu S."/>
            <person name="Zeng C."/>
            <person name="Zhang J."/>
            <person name="Zhang Y."/>
            <person name="Li R."/>
            <person name="Xu Z."/>
            <person name="Li S."/>
            <person name="Li X."/>
            <person name="Zheng H."/>
            <person name="Cong L."/>
            <person name="Lin L."/>
            <person name="Yin J."/>
            <person name="Geng J."/>
            <person name="Li G."/>
            <person name="Shi J."/>
            <person name="Liu J."/>
            <person name="Lv H."/>
            <person name="Li J."/>
            <person name="Wang J."/>
            <person name="Deng Y."/>
            <person name="Ran L."/>
            <person name="Shi X."/>
            <person name="Wang X."/>
            <person name="Wu Q."/>
            <person name="Li C."/>
            <person name="Ren X."/>
            <person name="Wang J."/>
            <person name="Wang X."/>
            <person name="Li D."/>
            <person name="Liu D."/>
            <person name="Zhang X."/>
            <person name="Ji Z."/>
            <person name="Zhao W."/>
            <person name="Sun Y."/>
            <person name="Zhang Z."/>
            <person name="Bao J."/>
            <person name="Han Y."/>
            <person name="Dong L."/>
            <person name="Ji J."/>
            <person name="Chen P."/>
            <person name="Wu S."/>
            <person name="Liu J."/>
            <person name="Xiao Y."/>
            <person name="Bu D."/>
            <person name="Tan J."/>
            <person name="Yang L."/>
            <person name="Ye C."/>
            <person name="Zhang J."/>
            <person name="Xu J."/>
            <person name="Zhou Y."/>
            <person name="Yu Y."/>
            <person name="Zhang B."/>
            <person name="Zhuang S."/>
            <person name="Wei H."/>
            <person name="Liu B."/>
            <person name="Lei M."/>
            <person name="Yu H."/>
            <person name="Li Y."/>
            <person name="Xu H."/>
            <person name="Wei S."/>
            <person name="He X."/>
            <person name="Fang L."/>
            <person name="Zhang Z."/>
            <person name="Zhang Y."/>
            <person name="Huang X."/>
            <person name="Su Z."/>
            <person name="Tong W."/>
            <person name="Li J."/>
            <person name="Tong Z."/>
            <person name="Li S."/>
            <person name="Ye J."/>
            <person name="Wang L."/>
            <person name="Fang L."/>
            <person name="Lei T."/>
            <person name="Chen C.-S."/>
            <person name="Chen H.-C."/>
            <person name="Xu Z."/>
            <person name="Li H."/>
            <person name="Huang H."/>
            <person name="Zhang F."/>
            <person name="Xu H."/>
            <person name="Li N."/>
            <person name="Zhao C."/>
            <person name="Li S."/>
            <person name="Dong L."/>
            <person name="Huang Y."/>
            <person name="Li L."/>
            <person name="Xi Y."/>
            <person name="Qi Q."/>
            <person name="Li W."/>
            <person name="Zhang B."/>
            <person name="Hu W."/>
            <person name="Zhang Y."/>
            <person name="Tian X."/>
            <person name="Jiao Y."/>
            <person name="Liang X."/>
            <person name="Jin J."/>
            <person name="Gao L."/>
            <person name="Zheng W."/>
            <person name="Hao B."/>
            <person name="Liu S.-M."/>
            <person name="Wang W."/>
            <person name="Yuan L."/>
            <person name="Cao M."/>
            <person name="McDermott J."/>
            <person name="Samudrala R."/>
            <person name="Wang J."/>
            <person name="Wong G.K.-S."/>
            <person name="Yang H."/>
        </authorList>
    </citation>
    <scope>NUCLEOTIDE SEQUENCE [LARGE SCALE GENOMIC DNA]</scope>
    <source>
        <strain>cv. Nipponbare</strain>
    </source>
</reference>
<reference key="7">
    <citation type="journal article" date="2006" name="J. Plant Growth Regul.">
        <title>Characterization of CONSTITUTIVE PHOTOMORPHOGENESIS AND DWARFISM homologs in rice (Oryza sativa L.).</title>
        <authorList>
            <person name="Sakamoto T."/>
            <person name="Matsuoka M."/>
        </authorList>
    </citation>
    <scope>FUNCTION</scope>
    <scope>TISSUE SPECIFICITY</scope>
    <scope>INDUCTION</scope>
    <scope>DISRUPTION PHENOTYPE</scope>
</reference>
<sequence>MAAAALLLLAAAAAIVVVAMVLRWLLLLGGPAAGRLGKRALMPPGSTGLPLIGETLRLISAYKTPNPEPFIDERVARHGGVFTTHVFGERTVFSADPAFNRLLLAAEGRAVHSSYPSSIATLLGARSLLLTRGAAHKRLHSLTLTRLGRPASPPLLAHIDRLVLATMRQWEPAATVRLMDEAKKITFNLTVKQLVSIEPGPWTESLRREYVKLIDGFFSIPFPLANLLPFTTYGQALKARKKVAGALREVIKKRMEEKAENGGSIGDDEGKKEKKDMVEELLEAEGGSFSEEEMVDFCLSLLVAGYETTSMLMTLAVKFLTETPAALAELKEEHANIRDMKGKKQPLEWSDYKSMPFTQCVINETLRVGNIISGVFRRANTDIHYKDYTIPKGCKIFASFRAVHLNNEHYENARTFNPWRWQINNKLQNAVGANIFTPFGGGPRLCPGYELARVVVSIFLHHLVTRFSWEETEEDRLVFFPTTRTLKGYPINLRLLSESIC</sequence>
<name>C90A3_ORYSJ</name>
<accession>Q2RAP4</accession>
<accession>Q5CCK2</accession>
<keyword id="KW-1069">Brassinosteroid biosynthesis</keyword>
<keyword id="KW-0349">Heme</keyword>
<keyword id="KW-0408">Iron</keyword>
<keyword id="KW-0444">Lipid biosynthesis</keyword>
<keyword id="KW-0443">Lipid metabolism</keyword>
<keyword id="KW-0472">Membrane</keyword>
<keyword id="KW-0479">Metal-binding</keyword>
<keyword id="KW-0503">Monooxygenase</keyword>
<keyword id="KW-0560">Oxidoreductase</keyword>
<keyword id="KW-1185">Reference proteome</keyword>
<keyword id="KW-0752">Steroid biosynthesis</keyword>
<keyword id="KW-0812">Transmembrane</keyword>
<keyword id="KW-1133">Transmembrane helix</keyword>
<comment type="function">
    <text evidence="6">Catalyzes the C23-alpha-hydroxylation step in brassinosteroid biosynthesis (Probable). Converts 6-deoxocathasterone (6-deoxoCT) to 6-deoxoteasterone (6-deoxoTE) in the late C6-oxidation pathway and cathasterone (CT) to teasterone (TE) in the early C6-oxidation pathway of brassinolide (BL) biosynthesis (Probable).</text>
</comment>
<comment type="cofactor">
    <cofactor evidence="1">
        <name>heme</name>
        <dbReference type="ChEBI" id="CHEBI:30413"/>
    </cofactor>
</comment>
<comment type="pathway">
    <text evidence="5">Plant hormone biosynthesis; brassinosteroid biosynthesis.</text>
</comment>
<comment type="subcellular location">
    <subcellularLocation>
        <location evidence="2">Membrane</location>
        <topology evidence="2">Single-pass membrane protein</topology>
    </subcellularLocation>
</comment>
<comment type="tissue specificity">
    <text evidence="3">Highly expressed in shoot apex and inflorenscence. Expressed in roots, stems, leaf blades and leaf sheaths.</text>
</comment>
<comment type="induction">
    <text evidence="3">Down-regulated by brassinolide (BL).</text>
</comment>
<comment type="disruption phenotype">
    <text evidence="3">No visible phenotype under normal growth conditions.</text>
</comment>
<comment type="similarity">
    <text evidence="5">Belongs to the cytochrome P450 family.</text>
</comment>
<gene>
    <name evidence="4" type="primary">CYP90A3</name>
    <name evidence="4" type="synonym">CPD1</name>
    <name evidence="8" type="ordered locus">Os11g0143200</name>
    <name evidence="7" type="ordered locus">LOC_Os11g04710</name>
    <name evidence="9" type="ORF">OsJ_32928</name>
</gene>
<evidence type="ECO:0000250" key="1">
    <source>
        <dbReference type="UniProtKB" id="P04798"/>
    </source>
</evidence>
<evidence type="ECO:0000255" key="2"/>
<evidence type="ECO:0000269" key="3">
    <source ref="7"/>
</evidence>
<evidence type="ECO:0000303" key="4">
    <source ref="7"/>
</evidence>
<evidence type="ECO:0000305" key="5"/>
<evidence type="ECO:0000305" key="6">
    <source ref="7"/>
</evidence>
<evidence type="ECO:0000312" key="7">
    <source>
        <dbReference type="EMBL" id="ABA91412.1"/>
    </source>
</evidence>
<evidence type="ECO:0000312" key="8">
    <source>
        <dbReference type="EMBL" id="BAF27566.1"/>
    </source>
</evidence>
<evidence type="ECO:0000312" key="9">
    <source>
        <dbReference type="EMBL" id="EAZ17406.1"/>
    </source>
</evidence>